<comment type="similarity">
    <text evidence="1">Belongs to the bacterial ribosomal protein bL28 family.</text>
</comment>
<organism>
    <name type="scientific">Corynebacterium kroppenstedtii (strain DSM 44385 / JCM 11950 / CIP 105744 / CCUG 35717)</name>
    <dbReference type="NCBI Taxonomy" id="645127"/>
    <lineage>
        <taxon>Bacteria</taxon>
        <taxon>Bacillati</taxon>
        <taxon>Actinomycetota</taxon>
        <taxon>Actinomycetes</taxon>
        <taxon>Mycobacteriales</taxon>
        <taxon>Corynebacteriaceae</taxon>
        <taxon>Corynebacterium</taxon>
    </lineage>
</organism>
<proteinExistence type="inferred from homology"/>
<evidence type="ECO:0000255" key="1">
    <source>
        <dbReference type="HAMAP-Rule" id="MF_00373"/>
    </source>
</evidence>
<evidence type="ECO:0000256" key="2">
    <source>
        <dbReference type="SAM" id="MobiDB-lite"/>
    </source>
</evidence>
<evidence type="ECO:0000305" key="3"/>
<sequence length="78" mass="8950">MSAYCQVTGRKPSFGKSVSHSHRRTNRRWNPNIQRRSFYLPSEGRTITLNVSTKGLKTIDRYGIESVVAKLRARGEKI</sequence>
<gene>
    <name evidence="1" type="primary">rpmB</name>
    <name type="ordered locus">ckrop_0482</name>
</gene>
<feature type="chain" id="PRO_1000205591" description="Large ribosomal subunit protein bL28">
    <location>
        <begin position="1"/>
        <end position="78"/>
    </location>
</feature>
<feature type="region of interest" description="Disordered" evidence="2">
    <location>
        <begin position="1"/>
        <end position="27"/>
    </location>
</feature>
<accession>C4LHF3</accession>
<protein>
    <recommendedName>
        <fullName evidence="1">Large ribosomal subunit protein bL28</fullName>
    </recommendedName>
    <alternativeName>
        <fullName evidence="3">50S ribosomal protein L28</fullName>
    </alternativeName>
</protein>
<keyword id="KW-1185">Reference proteome</keyword>
<keyword id="KW-0687">Ribonucleoprotein</keyword>
<keyword id="KW-0689">Ribosomal protein</keyword>
<name>RL28_CORK4</name>
<reference key="1">
    <citation type="journal article" date="2008" name="J. Biotechnol.">
        <title>Ultrafast pyrosequencing of Corynebacterium kroppenstedtii DSM44385 revealed insights into the physiology of a lipophilic corynebacterium that lacks mycolic acids.</title>
        <authorList>
            <person name="Tauch A."/>
            <person name="Schneider J."/>
            <person name="Szczepanowski R."/>
            <person name="Tilker A."/>
            <person name="Viehoever P."/>
            <person name="Gartemann K.-H."/>
            <person name="Arnold W."/>
            <person name="Blom J."/>
            <person name="Brinkrolf K."/>
            <person name="Brune I."/>
            <person name="Goetker S."/>
            <person name="Weisshaar B."/>
            <person name="Goesmann A."/>
            <person name="Droege M."/>
            <person name="Puehler A."/>
        </authorList>
    </citation>
    <scope>NUCLEOTIDE SEQUENCE [LARGE SCALE GENOMIC DNA]</scope>
    <source>
        <strain>DSM 44385 / JCM 11950 / CIP 105744 / CCUG 35717</strain>
    </source>
</reference>
<dbReference type="EMBL" id="CP001620">
    <property type="protein sequence ID" value="ACR17258.1"/>
    <property type="molecule type" value="Genomic_DNA"/>
</dbReference>
<dbReference type="RefSeq" id="WP_012731145.1">
    <property type="nucleotide sequence ID" value="NC_012704.1"/>
</dbReference>
<dbReference type="SMR" id="C4LHF3"/>
<dbReference type="STRING" id="645127.ckrop_0482"/>
<dbReference type="GeneID" id="92727068"/>
<dbReference type="KEGG" id="ckp:ckrop_0482"/>
<dbReference type="eggNOG" id="COG0227">
    <property type="taxonomic scope" value="Bacteria"/>
</dbReference>
<dbReference type="HOGENOM" id="CLU_064548_3_1_11"/>
<dbReference type="OrthoDB" id="9805609at2"/>
<dbReference type="Proteomes" id="UP000001473">
    <property type="component" value="Chromosome"/>
</dbReference>
<dbReference type="GO" id="GO:1990904">
    <property type="term" value="C:ribonucleoprotein complex"/>
    <property type="evidence" value="ECO:0007669"/>
    <property type="project" value="UniProtKB-KW"/>
</dbReference>
<dbReference type="GO" id="GO:0005840">
    <property type="term" value="C:ribosome"/>
    <property type="evidence" value="ECO:0007669"/>
    <property type="project" value="UniProtKB-KW"/>
</dbReference>
<dbReference type="GO" id="GO:0003735">
    <property type="term" value="F:structural constituent of ribosome"/>
    <property type="evidence" value="ECO:0007669"/>
    <property type="project" value="InterPro"/>
</dbReference>
<dbReference type="GO" id="GO:0006412">
    <property type="term" value="P:translation"/>
    <property type="evidence" value="ECO:0007669"/>
    <property type="project" value="UniProtKB-UniRule"/>
</dbReference>
<dbReference type="FunFam" id="2.30.170.40:FF:000001">
    <property type="entry name" value="50S ribosomal protein L28"/>
    <property type="match status" value="1"/>
</dbReference>
<dbReference type="Gene3D" id="2.30.170.40">
    <property type="entry name" value="Ribosomal protein L28/L24"/>
    <property type="match status" value="1"/>
</dbReference>
<dbReference type="HAMAP" id="MF_00373">
    <property type="entry name" value="Ribosomal_bL28"/>
    <property type="match status" value="1"/>
</dbReference>
<dbReference type="InterPro" id="IPR050096">
    <property type="entry name" value="Bacterial_rp_bL28"/>
</dbReference>
<dbReference type="InterPro" id="IPR026569">
    <property type="entry name" value="Ribosomal_bL28"/>
</dbReference>
<dbReference type="InterPro" id="IPR034704">
    <property type="entry name" value="Ribosomal_bL28/bL31-like_sf"/>
</dbReference>
<dbReference type="InterPro" id="IPR001383">
    <property type="entry name" value="Ribosomal_bL28_bact-type"/>
</dbReference>
<dbReference type="InterPro" id="IPR037147">
    <property type="entry name" value="Ribosomal_bL28_sf"/>
</dbReference>
<dbReference type="NCBIfam" id="TIGR00009">
    <property type="entry name" value="L28"/>
    <property type="match status" value="1"/>
</dbReference>
<dbReference type="PANTHER" id="PTHR39080">
    <property type="entry name" value="50S RIBOSOMAL PROTEIN L28"/>
    <property type="match status" value="1"/>
</dbReference>
<dbReference type="PANTHER" id="PTHR39080:SF1">
    <property type="entry name" value="LARGE RIBOSOMAL SUBUNIT PROTEIN BL28A"/>
    <property type="match status" value="1"/>
</dbReference>
<dbReference type="Pfam" id="PF00830">
    <property type="entry name" value="Ribosomal_L28"/>
    <property type="match status" value="1"/>
</dbReference>
<dbReference type="SUPFAM" id="SSF143800">
    <property type="entry name" value="L28p-like"/>
    <property type="match status" value="1"/>
</dbReference>